<evidence type="ECO:0000250" key="1"/>
<evidence type="ECO:0000250" key="2">
    <source>
        <dbReference type="UniProtKB" id="P00185"/>
    </source>
</evidence>
<evidence type="ECO:0000250" key="3">
    <source>
        <dbReference type="UniProtKB" id="P04798"/>
    </source>
</evidence>
<evidence type="ECO:0000305" key="4"/>
<reference key="1">
    <citation type="journal article" date="2005" name="Mar. Pollut. Bull.">
        <title>Molecular cloning and mRNA expression of cytochrome P4501A1 and 1A2 in the liver of common minke whales (Balaenoptera acutorostrata).</title>
        <authorList>
            <person name="Niimi S."/>
            <person name="Watanabe M.X."/>
            <person name="Kim E.Y."/>
            <person name="Iwata H."/>
            <person name="Yasunaga G."/>
            <person name="Fujise Y."/>
            <person name="Tanabe S."/>
        </authorList>
    </citation>
    <scope>NUCLEOTIDE SEQUENCE [MRNA]</scope>
    <source>
        <tissue>Liver</tissue>
    </source>
</reference>
<sequence length="516" mass="58275">MFSVFGLSIPISATELLLASATFCLVFWVVRAWQPRVPKGLKSPPGPWSWPLIGHVLTLGKSPHLALSRLSQRYGDVLQIRIGCTPVLVLSGLDTIRQALVRQGDDFKGRPDLYSFTLVADGQSMTFNPDSGPVWAARRRLAQNALKSFSIASDPASSSSCYLEEHVSKESEYLIGKFQELMAGSGRFDPYRYVVVSVANVICAMCFGRRYDHESQVLLSVVGLSNEFGAVAASGNPADFIPILRYLPNTALDDFKDLNRRFYIFMQKMLKEHYKTFEKGRIRDITDSLIEHCQGKRLDENANIQLSDEKIVNVVMDLFGAGFDTVTTAISWSLMYLVTSPSVQKKIQEELDTVIGSARQPRLSDRPRLPYLEAFILETFRHSSFLPFTIPHSTTRDTSLNGFYIPKGRCVFVNQWQINHDQKLWDDPSAFWPERFLTADGTINKALSEKVILFGLGKRKCIGETIARWEVFLFLAILLQQVEFRVTPGVKVDMTPVYGLTMKHAHCEHFQAHMRS</sequence>
<gene>
    <name type="primary">CYP1A1</name>
</gene>
<accession>Q3LFU0</accession>
<proteinExistence type="evidence at transcript level"/>
<organism>
    <name type="scientific">Balaenoptera acutorostrata</name>
    <name type="common">Common minke whale</name>
    <name type="synonym">Balaena rostrata</name>
    <dbReference type="NCBI Taxonomy" id="9767"/>
    <lineage>
        <taxon>Eukaryota</taxon>
        <taxon>Metazoa</taxon>
        <taxon>Chordata</taxon>
        <taxon>Craniata</taxon>
        <taxon>Vertebrata</taxon>
        <taxon>Euteleostomi</taxon>
        <taxon>Mammalia</taxon>
        <taxon>Eutheria</taxon>
        <taxon>Laurasiatheria</taxon>
        <taxon>Artiodactyla</taxon>
        <taxon>Whippomorpha</taxon>
        <taxon>Cetacea</taxon>
        <taxon>Mysticeti</taxon>
        <taxon>Balaenopteridae</taxon>
        <taxon>Balaenoptera</taxon>
    </lineage>
</organism>
<name>CP1A1_BALAC</name>
<feature type="chain" id="PRO_0000232910" description="Cytochrome P450 1A1">
    <location>
        <begin position="1"/>
        <end position="516"/>
    </location>
</feature>
<feature type="region of interest" description="Mitochondrial targeting signal" evidence="2">
    <location>
        <begin position="33"/>
        <end position="44"/>
    </location>
</feature>
<feature type="binding site" evidence="1">
    <location>
        <position position="228"/>
    </location>
    <ligand>
        <name>substrate</name>
    </ligand>
</feature>
<feature type="binding site" description="axial binding residue" evidence="1">
    <location>
        <position position="461"/>
    </location>
    <ligand>
        <name>heme</name>
        <dbReference type="ChEBI" id="CHEBI:30413"/>
    </ligand>
    <ligandPart>
        <name>Fe</name>
        <dbReference type="ChEBI" id="CHEBI:18248"/>
    </ligandPart>
</feature>
<feature type="glycosylation site" description="O-linked (GlcNAc) serine" evidence="1">
    <location>
        <position position="71"/>
    </location>
</feature>
<protein>
    <recommendedName>
        <fullName>Cytochrome P450 1A1</fullName>
        <ecNumber evidence="3">1.14.14.1</ecNumber>
    </recommendedName>
    <alternativeName>
        <fullName>CYPIA1</fullName>
    </alternativeName>
    <alternativeName>
        <fullName>Cytochrome P450 form 6</fullName>
    </alternativeName>
    <alternativeName>
        <fullName>Cytochrome P450-C</fullName>
    </alternativeName>
    <alternativeName>
        <fullName>Cytochrome P450-P1</fullName>
    </alternativeName>
    <alternativeName>
        <fullName>Hydroperoxy icosatetraenoate dehydratase</fullName>
        <ecNumber evidence="3">4.2.1.152</ecNumber>
    </alternativeName>
</protein>
<dbReference type="EC" id="1.14.14.1" evidence="3"/>
<dbReference type="EC" id="4.2.1.152" evidence="3"/>
<dbReference type="EMBL" id="AB231891">
    <property type="protein sequence ID" value="BAE46562.1"/>
    <property type="molecule type" value="mRNA"/>
</dbReference>
<dbReference type="SMR" id="Q3LFU0"/>
<dbReference type="GlyCosmos" id="Q3LFU0">
    <property type="glycosylation" value="1 site, No reported glycans"/>
</dbReference>
<dbReference type="UniPathway" id="UPA00199"/>
<dbReference type="UniPathway" id="UPA00912"/>
<dbReference type="GO" id="GO:0005789">
    <property type="term" value="C:endoplasmic reticulum membrane"/>
    <property type="evidence" value="ECO:0007669"/>
    <property type="project" value="UniProtKB-SubCell"/>
</dbReference>
<dbReference type="GO" id="GO:0005743">
    <property type="term" value="C:mitochondrial inner membrane"/>
    <property type="evidence" value="ECO:0000250"/>
    <property type="project" value="UniProtKB"/>
</dbReference>
<dbReference type="GO" id="GO:0101020">
    <property type="term" value="F:estrogen 16-alpha-hydroxylase activity"/>
    <property type="evidence" value="ECO:0000250"/>
    <property type="project" value="UniProtKB"/>
</dbReference>
<dbReference type="GO" id="GO:0101021">
    <property type="term" value="F:estrogen 2-hydroxylase activity"/>
    <property type="evidence" value="ECO:0000250"/>
    <property type="project" value="UniProtKB"/>
</dbReference>
<dbReference type="GO" id="GO:0020037">
    <property type="term" value="F:heme binding"/>
    <property type="evidence" value="ECO:0007669"/>
    <property type="project" value="InterPro"/>
</dbReference>
<dbReference type="GO" id="GO:0030544">
    <property type="term" value="F:Hsp70 protein binding"/>
    <property type="evidence" value="ECO:0000250"/>
    <property type="project" value="UniProtKB"/>
</dbReference>
<dbReference type="GO" id="GO:0051879">
    <property type="term" value="F:Hsp90 protein binding"/>
    <property type="evidence" value="ECO:0000250"/>
    <property type="project" value="UniProtKB"/>
</dbReference>
<dbReference type="GO" id="GO:0106256">
    <property type="term" value="F:hydroperoxy icosatetraenoate dehydratase activity"/>
    <property type="evidence" value="ECO:0007669"/>
    <property type="project" value="UniProtKB-EC"/>
</dbReference>
<dbReference type="GO" id="GO:0005506">
    <property type="term" value="F:iron ion binding"/>
    <property type="evidence" value="ECO:0007669"/>
    <property type="project" value="InterPro"/>
</dbReference>
<dbReference type="GO" id="GO:0004508">
    <property type="term" value="F:steroid 17-alpha-monooxygenase activity"/>
    <property type="evidence" value="ECO:0007669"/>
    <property type="project" value="TreeGrafter"/>
</dbReference>
<dbReference type="GO" id="GO:0008210">
    <property type="term" value="P:estrogen metabolic process"/>
    <property type="evidence" value="ECO:0000250"/>
    <property type="project" value="UniProtKB"/>
</dbReference>
<dbReference type="GO" id="GO:0006631">
    <property type="term" value="P:fatty acid metabolic process"/>
    <property type="evidence" value="ECO:0007669"/>
    <property type="project" value="UniProtKB-UniPathway"/>
</dbReference>
<dbReference type="GO" id="GO:0042446">
    <property type="term" value="P:hormone biosynthetic process"/>
    <property type="evidence" value="ECO:0007669"/>
    <property type="project" value="TreeGrafter"/>
</dbReference>
<dbReference type="GO" id="GO:0042448">
    <property type="term" value="P:progesterone metabolic process"/>
    <property type="evidence" value="ECO:0007669"/>
    <property type="project" value="TreeGrafter"/>
</dbReference>
<dbReference type="GO" id="GO:0042572">
    <property type="term" value="P:retinol metabolic process"/>
    <property type="evidence" value="ECO:0000250"/>
    <property type="project" value="UniProtKB"/>
</dbReference>
<dbReference type="GO" id="GO:0006694">
    <property type="term" value="P:steroid biosynthetic process"/>
    <property type="evidence" value="ECO:0007669"/>
    <property type="project" value="UniProtKB-KW"/>
</dbReference>
<dbReference type="CDD" id="cd20676">
    <property type="entry name" value="CYP1A"/>
    <property type="match status" value="1"/>
</dbReference>
<dbReference type="FunFam" id="1.10.630.10:FF:000002">
    <property type="entry name" value="Cytochrome P450 1A1"/>
    <property type="match status" value="1"/>
</dbReference>
<dbReference type="Gene3D" id="1.10.630.10">
    <property type="entry name" value="Cytochrome P450"/>
    <property type="match status" value="1"/>
</dbReference>
<dbReference type="InterPro" id="IPR001128">
    <property type="entry name" value="Cyt_P450"/>
</dbReference>
<dbReference type="InterPro" id="IPR017972">
    <property type="entry name" value="Cyt_P450_CS"/>
</dbReference>
<dbReference type="InterPro" id="IPR002401">
    <property type="entry name" value="Cyt_P450_E_grp-I"/>
</dbReference>
<dbReference type="InterPro" id="IPR008066">
    <property type="entry name" value="Cyt_P450_E_grp-I_CYP1"/>
</dbReference>
<dbReference type="InterPro" id="IPR036396">
    <property type="entry name" value="Cyt_P450_sf"/>
</dbReference>
<dbReference type="PANTHER" id="PTHR24289:SF21">
    <property type="entry name" value="CYTOCHROME P450 1A"/>
    <property type="match status" value="1"/>
</dbReference>
<dbReference type="PANTHER" id="PTHR24289">
    <property type="entry name" value="STEROID 17-ALPHA-HYDROXYLASE/17,20 LYASE"/>
    <property type="match status" value="1"/>
</dbReference>
<dbReference type="Pfam" id="PF00067">
    <property type="entry name" value="p450"/>
    <property type="match status" value="1"/>
</dbReference>
<dbReference type="PRINTS" id="PR00463">
    <property type="entry name" value="EP450I"/>
</dbReference>
<dbReference type="PRINTS" id="PR01683">
    <property type="entry name" value="EP450ICYP1A"/>
</dbReference>
<dbReference type="PRINTS" id="PR00385">
    <property type="entry name" value="P450"/>
</dbReference>
<dbReference type="SUPFAM" id="SSF48264">
    <property type="entry name" value="Cytochrome P450"/>
    <property type="match status" value="1"/>
</dbReference>
<dbReference type="PROSITE" id="PS00086">
    <property type="entry name" value="CYTOCHROME_P450"/>
    <property type="match status" value="1"/>
</dbReference>
<comment type="function">
    <text evidence="3">A cytochrome P450 monooxygenase involved in the metabolism of various endogenous substrates, including fatty acids, steroid hormones and vitamins. Mechanistically, uses molecular oxygen inserting one oxygen atom into a substrate, and reducing the second into a water molecule, with two electrons provided by NADPH via cytochrome P450 reductase (CPR; NADPH-ferrihemoprotein reductase). Catalyzes the hydroxylation of carbon-hydrogen bonds. Exhibits high catalytic activity for the formation of hydroxyestrogens from estrone (E1) and 17beta-estradiol (E2), namely 2-hydroxy E1 and E2, as well as D-ring hydroxylated E1 and E2 at the C15alpha and C16alpha positions. Displays different regioselectivities for polyunsaturated fatty acids (PUFA) hydroxylation. Catalyzes the epoxidation of double bonds of certain PUFA. Converts arachidonic acid toward epoxyeicosatrienoic acid (EET) regioisomers, 8,9-, 11,12-, and 14,15-EET, that function as lipid mediators in the vascular system. Displays an absolute stereoselectivity in the epoxidation of eicosapentaenoic acid (EPA) producing the 17(R),18(S) enantiomer. May play an important role in all-trans retinoic acid biosynthesis in extrahepatic tissues. Catalyzes two successive oxidative transformation of all-trans retinol to all-trans retinal and then to the active form all-trans retinoic acid. May also participate in eicosanoids metabolism by converting hydroperoxide species into oxo metabolites (lipoxygenase-like reaction, NADPH-independent).</text>
</comment>
<comment type="catalytic activity">
    <reaction evidence="3">
        <text>an organic molecule + reduced [NADPH--hemoprotein reductase] + O2 = an alcohol + oxidized [NADPH--hemoprotein reductase] + H2O + H(+)</text>
        <dbReference type="Rhea" id="RHEA:17149"/>
        <dbReference type="Rhea" id="RHEA-COMP:11964"/>
        <dbReference type="Rhea" id="RHEA-COMP:11965"/>
        <dbReference type="ChEBI" id="CHEBI:15377"/>
        <dbReference type="ChEBI" id="CHEBI:15378"/>
        <dbReference type="ChEBI" id="CHEBI:15379"/>
        <dbReference type="ChEBI" id="CHEBI:30879"/>
        <dbReference type="ChEBI" id="CHEBI:57618"/>
        <dbReference type="ChEBI" id="CHEBI:58210"/>
        <dbReference type="ChEBI" id="CHEBI:142491"/>
        <dbReference type="EC" id="1.14.14.1"/>
    </reaction>
    <physiologicalReaction direction="right-to-left" evidence="3">
        <dbReference type="Rhea" id="RHEA:17151"/>
    </physiologicalReaction>
</comment>
<comment type="catalytic activity">
    <reaction evidence="3">
        <text>estrone + reduced [NADPH--hemoprotein reductase] + O2 = 2-hydroxyestrone + oxidized [NADPH--hemoprotein reductase] + H2O + H(+)</text>
        <dbReference type="Rhea" id="RHEA:47208"/>
        <dbReference type="Rhea" id="RHEA-COMP:11964"/>
        <dbReference type="Rhea" id="RHEA-COMP:11965"/>
        <dbReference type="ChEBI" id="CHEBI:1156"/>
        <dbReference type="ChEBI" id="CHEBI:15377"/>
        <dbReference type="ChEBI" id="CHEBI:15378"/>
        <dbReference type="ChEBI" id="CHEBI:15379"/>
        <dbReference type="ChEBI" id="CHEBI:17263"/>
        <dbReference type="ChEBI" id="CHEBI:57618"/>
        <dbReference type="ChEBI" id="CHEBI:58210"/>
    </reaction>
    <physiologicalReaction direction="left-to-right" evidence="3">
        <dbReference type="Rhea" id="RHEA:47209"/>
    </physiologicalReaction>
</comment>
<comment type="catalytic activity">
    <reaction evidence="3">
        <text>estrone + reduced [NADPH--hemoprotein reductase] + O2 = 4-hydroxyestrone + oxidized [NADPH--hemoprotein reductase] + H2O + H(+)</text>
        <dbReference type="Rhea" id="RHEA:47292"/>
        <dbReference type="Rhea" id="RHEA-COMP:11964"/>
        <dbReference type="Rhea" id="RHEA-COMP:11965"/>
        <dbReference type="ChEBI" id="CHEBI:15377"/>
        <dbReference type="ChEBI" id="CHEBI:15378"/>
        <dbReference type="ChEBI" id="CHEBI:15379"/>
        <dbReference type="ChEBI" id="CHEBI:17263"/>
        <dbReference type="ChEBI" id="CHEBI:57618"/>
        <dbReference type="ChEBI" id="CHEBI:58210"/>
        <dbReference type="ChEBI" id="CHEBI:87602"/>
    </reaction>
    <physiologicalReaction direction="left-to-right" evidence="3">
        <dbReference type="Rhea" id="RHEA:47293"/>
    </physiologicalReaction>
</comment>
<comment type="catalytic activity">
    <reaction evidence="3">
        <text>estrone + reduced [NADPH--hemoprotein reductase] + O2 = 6alpha-hydroxyestrone + oxidized [NADPH--hemoprotein reductase] + H2O + H(+)</text>
        <dbReference type="Rhea" id="RHEA:47308"/>
        <dbReference type="Rhea" id="RHEA-COMP:11964"/>
        <dbReference type="Rhea" id="RHEA-COMP:11965"/>
        <dbReference type="ChEBI" id="CHEBI:15377"/>
        <dbReference type="ChEBI" id="CHEBI:15378"/>
        <dbReference type="ChEBI" id="CHEBI:15379"/>
        <dbReference type="ChEBI" id="CHEBI:17263"/>
        <dbReference type="ChEBI" id="CHEBI:57618"/>
        <dbReference type="ChEBI" id="CHEBI:58210"/>
        <dbReference type="ChEBI" id="CHEBI:87605"/>
    </reaction>
    <physiologicalReaction direction="left-to-right" evidence="3">
        <dbReference type="Rhea" id="RHEA:47309"/>
    </physiologicalReaction>
</comment>
<comment type="catalytic activity">
    <reaction evidence="3">
        <text>estrone + reduced [NADPH--hemoprotein reductase] + O2 = 15alpha-hydroxyestrone + oxidized [NADPH--hemoprotein reductase] + H2O + H(+)</text>
        <dbReference type="Rhea" id="RHEA:47312"/>
        <dbReference type="Rhea" id="RHEA-COMP:11964"/>
        <dbReference type="Rhea" id="RHEA-COMP:11965"/>
        <dbReference type="ChEBI" id="CHEBI:15377"/>
        <dbReference type="ChEBI" id="CHEBI:15378"/>
        <dbReference type="ChEBI" id="CHEBI:15379"/>
        <dbReference type="ChEBI" id="CHEBI:17263"/>
        <dbReference type="ChEBI" id="CHEBI:57618"/>
        <dbReference type="ChEBI" id="CHEBI:58210"/>
        <dbReference type="ChEBI" id="CHEBI:87618"/>
    </reaction>
    <physiologicalReaction direction="left-to-right" evidence="3">
        <dbReference type="Rhea" id="RHEA:47313"/>
    </physiologicalReaction>
</comment>
<comment type="catalytic activity">
    <reaction evidence="3">
        <text>estrone + reduced [NADPH--hemoprotein reductase] + O2 = 16alpha-hydroxyestrone + oxidized [NADPH--hemoprotein reductase] + H2O + H(+)</text>
        <dbReference type="Rhea" id="RHEA:47204"/>
        <dbReference type="Rhea" id="RHEA-COMP:11964"/>
        <dbReference type="Rhea" id="RHEA-COMP:11965"/>
        <dbReference type="ChEBI" id="CHEBI:776"/>
        <dbReference type="ChEBI" id="CHEBI:15377"/>
        <dbReference type="ChEBI" id="CHEBI:15378"/>
        <dbReference type="ChEBI" id="CHEBI:15379"/>
        <dbReference type="ChEBI" id="CHEBI:17263"/>
        <dbReference type="ChEBI" id="CHEBI:57618"/>
        <dbReference type="ChEBI" id="CHEBI:58210"/>
    </reaction>
    <physiologicalReaction direction="left-to-right" evidence="3">
        <dbReference type="Rhea" id="RHEA:47205"/>
    </physiologicalReaction>
</comment>
<comment type="catalytic activity">
    <reaction evidence="3">
        <text>17beta-estradiol + reduced [NADPH--hemoprotein reductase] + O2 = 2-hydroxy-17beta-estradiol + oxidized [NADPH--hemoprotein reductase] + H2O + H(+)</text>
        <dbReference type="Rhea" id="RHEA:47212"/>
        <dbReference type="Rhea" id="RHEA-COMP:11964"/>
        <dbReference type="Rhea" id="RHEA-COMP:11965"/>
        <dbReference type="ChEBI" id="CHEBI:15377"/>
        <dbReference type="ChEBI" id="CHEBI:15378"/>
        <dbReference type="ChEBI" id="CHEBI:15379"/>
        <dbReference type="ChEBI" id="CHEBI:16469"/>
        <dbReference type="ChEBI" id="CHEBI:28744"/>
        <dbReference type="ChEBI" id="CHEBI:57618"/>
        <dbReference type="ChEBI" id="CHEBI:58210"/>
    </reaction>
    <physiologicalReaction direction="left-to-right" evidence="3">
        <dbReference type="Rhea" id="RHEA:47213"/>
    </physiologicalReaction>
</comment>
<comment type="catalytic activity">
    <reaction evidence="3">
        <text>17beta-estradiol + reduced [NADPH--hemoprotein reductase] + O2 = 4-hydroxy-17beta-estradiol + oxidized [NADPH--hemoprotein reductase] + H2O + H(+)</text>
        <dbReference type="Rhea" id="RHEA:47280"/>
        <dbReference type="Rhea" id="RHEA-COMP:11964"/>
        <dbReference type="Rhea" id="RHEA-COMP:11965"/>
        <dbReference type="ChEBI" id="CHEBI:15377"/>
        <dbReference type="ChEBI" id="CHEBI:15378"/>
        <dbReference type="ChEBI" id="CHEBI:15379"/>
        <dbReference type="ChEBI" id="CHEBI:16469"/>
        <dbReference type="ChEBI" id="CHEBI:57618"/>
        <dbReference type="ChEBI" id="CHEBI:58210"/>
        <dbReference type="ChEBI" id="CHEBI:62845"/>
    </reaction>
    <physiologicalReaction direction="left-to-right" evidence="3">
        <dbReference type="Rhea" id="RHEA:47281"/>
    </physiologicalReaction>
</comment>
<comment type="catalytic activity">
    <reaction evidence="3">
        <text>17beta-estradiol + reduced [NADPH--hemoprotein reductase] + O2 = 6alpha-hydroxy-17beta-estradiol + oxidized [NADPH--hemoprotein reductase] + H2O + H(+)</text>
        <dbReference type="Rhea" id="RHEA:47284"/>
        <dbReference type="Rhea" id="RHEA-COMP:11964"/>
        <dbReference type="Rhea" id="RHEA-COMP:11965"/>
        <dbReference type="ChEBI" id="CHEBI:15377"/>
        <dbReference type="ChEBI" id="CHEBI:15378"/>
        <dbReference type="ChEBI" id="CHEBI:15379"/>
        <dbReference type="ChEBI" id="CHEBI:16469"/>
        <dbReference type="ChEBI" id="CHEBI:57618"/>
        <dbReference type="ChEBI" id="CHEBI:58210"/>
        <dbReference type="ChEBI" id="CHEBI:62847"/>
    </reaction>
    <physiologicalReaction direction="left-to-right" evidence="3">
        <dbReference type="Rhea" id="RHEA:47285"/>
    </physiologicalReaction>
</comment>
<comment type="catalytic activity">
    <reaction evidence="3">
        <text>17beta-estradiol + reduced [NADPH--hemoprotein reductase] + O2 = 7alpha-hydroxy-17beta-estradiol + oxidized [NADPH--hemoprotein reductase] + H2O + H(+)</text>
        <dbReference type="Rhea" id="RHEA:47288"/>
        <dbReference type="Rhea" id="RHEA-COMP:11964"/>
        <dbReference type="Rhea" id="RHEA-COMP:11965"/>
        <dbReference type="ChEBI" id="CHEBI:15377"/>
        <dbReference type="ChEBI" id="CHEBI:15378"/>
        <dbReference type="ChEBI" id="CHEBI:15379"/>
        <dbReference type="ChEBI" id="CHEBI:16469"/>
        <dbReference type="ChEBI" id="CHEBI:57618"/>
        <dbReference type="ChEBI" id="CHEBI:58210"/>
        <dbReference type="ChEBI" id="CHEBI:87598"/>
    </reaction>
    <physiologicalReaction direction="left-to-right" evidence="3">
        <dbReference type="Rhea" id="RHEA:47289"/>
    </physiologicalReaction>
</comment>
<comment type="catalytic activity">
    <reaction evidence="3">
        <text>17beta-estradiol + reduced [NADPH--hemoprotein reductase] + O2 = 15alpha-hydroxy-17beta-estradiol + oxidized [NADPH--hemoprotein reductase] + H2O + H(+)</text>
        <dbReference type="Rhea" id="RHEA:47276"/>
        <dbReference type="Rhea" id="RHEA-COMP:11964"/>
        <dbReference type="Rhea" id="RHEA-COMP:11965"/>
        <dbReference type="ChEBI" id="CHEBI:15377"/>
        <dbReference type="ChEBI" id="CHEBI:15378"/>
        <dbReference type="ChEBI" id="CHEBI:15379"/>
        <dbReference type="ChEBI" id="CHEBI:16469"/>
        <dbReference type="ChEBI" id="CHEBI:57618"/>
        <dbReference type="ChEBI" id="CHEBI:58210"/>
        <dbReference type="ChEBI" id="CHEBI:87593"/>
    </reaction>
    <physiologicalReaction direction="left-to-right" evidence="3">
        <dbReference type="Rhea" id="RHEA:47277"/>
    </physiologicalReaction>
</comment>
<comment type="catalytic activity">
    <reaction evidence="3">
        <text>(5Z,8Z,11Z)-eicosatrienoate + reduced [NADPH--hemoprotein reductase] + O2 = 19-hydroxy-(5Z,8Z,11Z)-eicosatrienoate + oxidized [NADPH--hemoprotein reductase] + H2O + H(+)</text>
        <dbReference type="Rhea" id="RHEA:50076"/>
        <dbReference type="Rhea" id="RHEA-COMP:11964"/>
        <dbReference type="Rhea" id="RHEA-COMP:11965"/>
        <dbReference type="ChEBI" id="CHEBI:15377"/>
        <dbReference type="ChEBI" id="CHEBI:15378"/>
        <dbReference type="ChEBI" id="CHEBI:15379"/>
        <dbReference type="ChEBI" id="CHEBI:57618"/>
        <dbReference type="ChEBI" id="CHEBI:58210"/>
        <dbReference type="ChEBI" id="CHEBI:78043"/>
        <dbReference type="ChEBI" id="CHEBI:132024"/>
    </reaction>
    <physiologicalReaction direction="left-to-right" evidence="3">
        <dbReference type="Rhea" id="RHEA:50077"/>
    </physiologicalReaction>
</comment>
<comment type="catalytic activity">
    <reaction evidence="3">
        <text>(5Z,8Z,11Z,14Z)-eicosatetraenoate + reduced [NADPH--hemoprotein reductase] + O2 = 16-hydroxy-(5Z,8Z,11Z,14Z)-eicosatetraenoate + oxidized [NADPH--hemoprotein reductase] + H2O + H(+)</text>
        <dbReference type="Rhea" id="RHEA:49972"/>
        <dbReference type="Rhea" id="RHEA-COMP:11964"/>
        <dbReference type="Rhea" id="RHEA-COMP:11965"/>
        <dbReference type="ChEBI" id="CHEBI:15377"/>
        <dbReference type="ChEBI" id="CHEBI:15378"/>
        <dbReference type="ChEBI" id="CHEBI:15379"/>
        <dbReference type="ChEBI" id="CHEBI:32395"/>
        <dbReference type="ChEBI" id="CHEBI:57618"/>
        <dbReference type="ChEBI" id="CHEBI:58210"/>
        <dbReference type="ChEBI" id="CHEBI:132019"/>
    </reaction>
    <physiologicalReaction direction="left-to-right" evidence="3">
        <dbReference type="Rhea" id="RHEA:49973"/>
    </physiologicalReaction>
</comment>
<comment type="catalytic activity">
    <reaction evidence="3">
        <text>(5Z,8Z,11Z,14Z)-eicosatetraenoate + reduced [NADPH--hemoprotein reductase] + O2 = 17-hydroxy-(5Z,8Z,11Z,14Z)-eicosatetraenoate + oxidized [NADPH--hemoprotein reductase] + H2O + H(+)</text>
        <dbReference type="Rhea" id="RHEA:49968"/>
        <dbReference type="Rhea" id="RHEA-COMP:11964"/>
        <dbReference type="Rhea" id="RHEA-COMP:11965"/>
        <dbReference type="ChEBI" id="CHEBI:15377"/>
        <dbReference type="ChEBI" id="CHEBI:15378"/>
        <dbReference type="ChEBI" id="CHEBI:15379"/>
        <dbReference type="ChEBI" id="CHEBI:32395"/>
        <dbReference type="ChEBI" id="CHEBI:57618"/>
        <dbReference type="ChEBI" id="CHEBI:58210"/>
        <dbReference type="ChEBI" id="CHEBI:132016"/>
    </reaction>
    <physiologicalReaction direction="left-to-right" evidence="3">
        <dbReference type="Rhea" id="RHEA:49969"/>
    </physiologicalReaction>
</comment>
<comment type="catalytic activity">
    <reaction evidence="3">
        <text>(5Z,8Z,11Z,14Z)-eicosatetraenoate + reduced [NADPH--hemoprotein reductase] + O2 = 18-hydroxy-(5Z,8Z,11Z,14Z)-eicosatetraenoate + oxidized [NADPH--hemoprotein reductase] + H2O + H(+)</text>
        <dbReference type="Rhea" id="RHEA:39811"/>
        <dbReference type="Rhea" id="RHEA-COMP:11964"/>
        <dbReference type="Rhea" id="RHEA-COMP:11965"/>
        <dbReference type="ChEBI" id="CHEBI:15377"/>
        <dbReference type="ChEBI" id="CHEBI:15378"/>
        <dbReference type="ChEBI" id="CHEBI:15379"/>
        <dbReference type="ChEBI" id="CHEBI:32395"/>
        <dbReference type="ChEBI" id="CHEBI:57618"/>
        <dbReference type="ChEBI" id="CHEBI:58210"/>
        <dbReference type="ChEBI" id="CHEBI:63590"/>
    </reaction>
    <physiologicalReaction direction="left-to-right" evidence="3">
        <dbReference type="Rhea" id="RHEA:39812"/>
    </physiologicalReaction>
</comment>
<comment type="catalytic activity">
    <reaction evidence="3">
        <text>(5Z,8Z,11Z,14Z)-eicosatetraenoate + reduced [NADPH--hemoprotein reductase] + O2 = 19-hydroxy-(5Z,8Z,11Z,14Z)-eicosatetraenoate + oxidized [NADPH--hemoprotein reductase] + H2O + H(+)</text>
        <dbReference type="Rhea" id="RHEA:39759"/>
        <dbReference type="Rhea" id="RHEA-COMP:11964"/>
        <dbReference type="Rhea" id="RHEA-COMP:11965"/>
        <dbReference type="ChEBI" id="CHEBI:15377"/>
        <dbReference type="ChEBI" id="CHEBI:15378"/>
        <dbReference type="ChEBI" id="CHEBI:15379"/>
        <dbReference type="ChEBI" id="CHEBI:32395"/>
        <dbReference type="ChEBI" id="CHEBI:57618"/>
        <dbReference type="ChEBI" id="CHEBI:58210"/>
        <dbReference type="ChEBI" id="CHEBI:76627"/>
    </reaction>
    <physiologicalReaction direction="left-to-right" evidence="3">
        <dbReference type="Rhea" id="RHEA:39760"/>
    </physiologicalReaction>
</comment>
<comment type="catalytic activity">
    <reaction evidence="3">
        <text>(5Z,8Z,11Z,14Z,17Z)-eicosapentaenoate + reduced [NADPH--hemoprotein reductase] + O2 = 19-hydroxy-(5Z,8Z,11Z,14Z,17Z)-eicosapentaenoate + oxidized [NADPH--hemoprotein reductase] + H2O + H(+)</text>
        <dbReference type="Rhea" id="RHEA:39787"/>
        <dbReference type="Rhea" id="RHEA-COMP:11964"/>
        <dbReference type="Rhea" id="RHEA-COMP:11965"/>
        <dbReference type="ChEBI" id="CHEBI:15377"/>
        <dbReference type="ChEBI" id="CHEBI:15378"/>
        <dbReference type="ChEBI" id="CHEBI:15379"/>
        <dbReference type="ChEBI" id="CHEBI:57618"/>
        <dbReference type="ChEBI" id="CHEBI:58210"/>
        <dbReference type="ChEBI" id="CHEBI:58562"/>
        <dbReference type="ChEBI" id="CHEBI:76636"/>
    </reaction>
    <physiologicalReaction direction="left-to-right" evidence="3">
        <dbReference type="Rhea" id="RHEA:39788"/>
    </physiologicalReaction>
</comment>
<comment type="catalytic activity">
    <reaction evidence="3">
        <text>(5Z,8Z,11Z,14Z)-eicosatetraenoate + reduced [NADPH--hemoprotein reductase] + O2 = (8R,9S)-epoxy-(5Z,11Z,14Z)-eicosatrienoate + oxidized [NADPH--hemoprotein reductase] + H2O + H(+)</text>
        <dbReference type="Rhea" id="RHEA:49884"/>
        <dbReference type="Rhea" id="RHEA-COMP:11964"/>
        <dbReference type="Rhea" id="RHEA-COMP:11965"/>
        <dbReference type="ChEBI" id="CHEBI:15377"/>
        <dbReference type="ChEBI" id="CHEBI:15378"/>
        <dbReference type="ChEBI" id="CHEBI:15379"/>
        <dbReference type="ChEBI" id="CHEBI:32395"/>
        <dbReference type="ChEBI" id="CHEBI:57618"/>
        <dbReference type="ChEBI" id="CHEBI:58210"/>
        <dbReference type="ChEBI" id="CHEBI:131975"/>
    </reaction>
    <physiologicalReaction direction="left-to-right" evidence="3">
        <dbReference type="Rhea" id="RHEA:49885"/>
    </physiologicalReaction>
</comment>
<comment type="catalytic activity">
    <reaction evidence="3">
        <text>(5Z,8Z,11Z,14Z)-eicosatetraenoate + reduced [NADPH--hemoprotein reductase] + O2 = (11R,12S)-epoxy-(5Z,8Z,14Z)-eicosatrienoate + oxidized [NADPH--hemoprotein reductase] + H2O + H(+)</text>
        <dbReference type="Rhea" id="RHEA:49880"/>
        <dbReference type="Rhea" id="RHEA-COMP:11964"/>
        <dbReference type="Rhea" id="RHEA-COMP:11965"/>
        <dbReference type="ChEBI" id="CHEBI:15377"/>
        <dbReference type="ChEBI" id="CHEBI:15378"/>
        <dbReference type="ChEBI" id="CHEBI:15379"/>
        <dbReference type="ChEBI" id="CHEBI:32395"/>
        <dbReference type="ChEBI" id="CHEBI:57618"/>
        <dbReference type="ChEBI" id="CHEBI:58210"/>
        <dbReference type="ChEBI" id="CHEBI:131970"/>
    </reaction>
    <physiologicalReaction direction="left-to-right" evidence="3">
        <dbReference type="Rhea" id="RHEA:49881"/>
    </physiologicalReaction>
</comment>
<comment type="catalytic activity">
    <reaction evidence="3">
        <text>(5Z,8Z,11Z,14Z)-eicosatetraenoate + reduced [NADPH--hemoprotein reductase] + O2 = (14S,15R)-epoxy-(5Z,8Z,11Z)-eicosatrienoate + oxidized [NADPH--hemoprotein reductase] + H2O + H(+)</text>
        <dbReference type="Rhea" id="RHEA:49856"/>
        <dbReference type="Rhea" id="RHEA-COMP:11964"/>
        <dbReference type="Rhea" id="RHEA-COMP:11965"/>
        <dbReference type="ChEBI" id="CHEBI:15377"/>
        <dbReference type="ChEBI" id="CHEBI:15378"/>
        <dbReference type="ChEBI" id="CHEBI:15379"/>
        <dbReference type="ChEBI" id="CHEBI:32395"/>
        <dbReference type="ChEBI" id="CHEBI:57618"/>
        <dbReference type="ChEBI" id="CHEBI:58210"/>
        <dbReference type="ChEBI" id="CHEBI:131964"/>
    </reaction>
    <physiologicalReaction direction="left-to-right" evidence="3">
        <dbReference type="Rhea" id="RHEA:49857"/>
    </physiologicalReaction>
</comment>
<comment type="catalytic activity">
    <reaction evidence="3">
        <text>(5Z,8Z,11Z,14Z)-eicosatetraenoate + reduced [NADPH--hemoprotein reductase] + O2 = (14R,15S)-epoxy-(5Z,8Z,11Z)-eicosatrienoate + oxidized [NADPH--hemoprotein reductase] + H2O + H(+)</text>
        <dbReference type="Rhea" id="RHEA:49860"/>
        <dbReference type="Rhea" id="RHEA-COMP:11964"/>
        <dbReference type="Rhea" id="RHEA-COMP:11965"/>
        <dbReference type="ChEBI" id="CHEBI:15377"/>
        <dbReference type="ChEBI" id="CHEBI:15378"/>
        <dbReference type="ChEBI" id="CHEBI:15379"/>
        <dbReference type="ChEBI" id="CHEBI:32395"/>
        <dbReference type="ChEBI" id="CHEBI:57618"/>
        <dbReference type="ChEBI" id="CHEBI:58210"/>
        <dbReference type="ChEBI" id="CHEBI:131965"/>
    </reaction>
    <physiologicalReaction direction="left-to-right" evidence="3">
        <dbReference type="Rhea" id="RHEA:49861"/>
    </physiologicalReaction>
</comment>
<comment type="catalytic activity">
    <reaction evidence="3">
        <text>(5Z,8Z,11Z,14Z,17Z)-eicosapentaenoate + reduced [NADPH--hemoprotein reductase] + O2 = (17R,18S)-epoxy-(5Z,8Z,11Z,14Z)-eicosatetraenoate + oxidized [NADPH--hemoprotein reductase] + H2O + H(+)</text>
        <dbReference type="Rhea" id="RHEA:39779"/>
        <dbReference type="Rhea" id="RHEA-COMP:11964"/>
        <dbReference type="Rhea" id="RHEA-COMP:11965"/>
        <dbReference type="ChEBI" id="CHEBI:15377"/>
        <dbReference type="ChEBI" id="CHEBI:15378"/>
        <dbReference type="ChEBI" id="CHEBI:15379"/>
        <dbReference type="ChEBI" id="CHEBI:57618"/>
        <dbReference type="ChEBI" id="CHEBI:58210"/>
        <dbReference type="ChEBI" id="CHEBI:58562"/>
        <dbReference type="ChEBI" id="CHEBI:76634"/>
    </reaction>
    <physiologicalReaction direction="left-to-right" evidence="3">
        <dbReference type="Rhea" id="RHEA:39780"/>
    </physiologicalReaction>
</comment>
<comment type="catalytic activity">
    <reaction evidence="3">
        <text>(4Z,7Z,10Z,13Z,16Z,19Z)-docosahexaenoate + reduced [NADPH--hemoprotein reductase] + O2 = (19S,20R)-epoxy-(4Z,7Z,10Z,13Z,16Z)-docosapentaenoate + oxidized [NADPH--hemoprotein reductase] + H2O + H(+)</text>
        <dbReference type="Rhea" id="RHEA:52124"/>
        <dbReference type="Rhea" id="RHEA-COMP:11964"/>
        <dbReference type="Rhea" id="RHEA-COMP:11965"/>
        <dbReference type="ChEBI" id="CHEBI:15377"/>
        <dbReference type="ChEBI" id="CHEBI:15378"/>
        <dbReference type="ChEBI" id="CHEBI:15379"/>
        <dbReference type="ChEBI" id="CHEBI:57618"/>
        <dbReference type="ChEBI" id="CHEBI:58210"/>
        <dbReference type="ChEBI" id="CHEBI:77016"/>
        <dbReference type="ChEBI" id="CHEBI:136411"/>
    </reaction>
    <physiologicalReaction direction="left-to-right" evidence="3">
        <dbReference type="Rhea" id="RHEA:52125"/>
    </physiologicalReaction>
</comment>
<comment type="catalytic activity">
    <reaction evidence="3">
        <text>(4Z,7Z,10Z,13Z,16Z,19Z)-docosahexaenoate + reduced [NADPH--hemoprotein reductase] + O2 = (19R,20S)-epoxy-(4Z,7Z,10Z,13Z,16Z)-docosapentaenoate + oxidized [NADPH--hemoprotein reductase] + H2O + H(+)</text>
        <dbReference type="Rhea" id="RHEA:52120"/>
        <dbReference type="Rhea" id="RHEA-COMP:11964"/>
        <dbReference type="Rhea" id="RHEA-COMP:11965"/>
        <dbReference type="ChEBI" id="CHEBI:15377"/>
        <dbReference type="ChEBI" id="CHEBI:15378"/>
        <dbReference type="ChEBI" id="CHEBI:15379"/>
        <dbReference type="ChEBI" id="CHEBI:57618"/>
        <dbReference type="ChEBI" id="CHEBI:58210"/>
        <dbReference type="ChEBI" id="CHEBI:77016"/>
        <dbReference type="ChEBI" id="CHEBI:136410"/>
    </reaction>
    <physiologicalReaction direction="left-to-right" evidence="3">
        <dbReference type="Rhea" id="RHEA:52121"/>
    </physiologicalReaction>
</comment>
<comment type="catalytic activity">
    <reaction evidence="3">
        <text>all-trans-retinol + reduced [NADPH--hemoprotein reductase] + O2 = all-trans-retinal + oxidized [NADPH--hemoprotein reductase] + 2 H2O + H(+)</text>
        <dbReference type="Rhea" id="RHEA:42092"/>
        <dbReference type="Rhea" id="RHEA-COMP:11964"/>
        <dbReference type="Rhea" id="RHEA-COMP:11965"/>
        <dbReference type="ChEBI" id="CHEBI:15377"/>
        <dbReference type="ChEBI" id="CHEBI:15378"/>
        <dbReference type="ChEBI" id="CHEBI:15379"/>
        <dbReference type="ChEBI" id="CHEBI:17336"/>
        <dbReference type="ChEBI" id="CHEBI:17898"/>
        <dbReference type="ChEBI" id="CHEBI:57618"/>
        <dbReference type="ChEBI" id="CHEBI:58210"/>
    </reaction>
    <physiologicalReaction direction="left-to-right" evidence="3">
        <dbReference type="Rhea" id="RHEA:42093"/>
    </physiologicalReaction>
</comment>
<comment type="catalytic activity">
    <reaction evidence="3">
        <text>all-trans-retinal + reduced [NADPH--hemoprotein reductase] + O2 = all-trans-retinoate + oxidized [NADPH--hemoprotein reductase] + H2O + 2 H(+)</text>
        <dbReference type="Rhea" id="RHEA:42088"/>
        <dbReference type="Rhea" id="RHEA-COMP:11964"/>
        <dbReference type="Rhea" id="RHEA-COMP:11965"/>
        <dbReference type="ChEBI" id="CHEBI:15377"/>
        <dbReference type="ChEBI" id="CHEBI:15378"/>
        <dbReference type="ChEBI" id="CHEBI:15379"/>
        <dbReference type="ChEBI" id="CHEBI:17898"/>
        <dbReference type="ChEBI" id="CHEBI:35291"/>
        <dbReference type="ChEBI" id="CHEBI:57618"/>
        <dbReference type="ChEBI" id="CHEBI:58210"/>
    </reaction>
    <physiologicalReaction direction="left-to-right" evidence="3">
        <dbReference type="Rhea" id="RHEA:42089"/>
    </physiologicalReaction>
</comment>
<comment type="catalytic activity">
    <reaction evidence="3">
        <text>(13S)-hydroperoxy-(9Z,11E)-octadecadienoate = 13-oxo-(9Z,11E)-octadecadienoate + H2O</text>
        <dbReference type="Rhea" id="RHEA:48716"/>
        <dbReference type="ChEBI" id="CHEBI:15377"/>
        <dbReference type="ChEBI" id="CHEBI:57466"/>
        <dbReference type="ChEBI" id="CHEBI:90781"/>
    </reaction>
    <physiologicalReaction direction="left-to-right" evidence="3">
        <dbReference type="Rhea" id="RHEA:48717"/>
    </physiologicalReaction>
</comment>
<comment type="catalytic activity">
    <reaction evidence="3">
        <text>(12S)-hydroperoxy-(5Z,8Z,10E,14Z)-eicosatetraenoate = 12-oxo-(5Z,8Z,10E,14Z)-eicosatetraenoate + H2O</text>
        <dbReference type="Rhea" id="RHEA:37947"/>
        <dbReference type="ChEBI" id="CHEBI:15377"/>
        <dbReference type="ChEBI" id="CHEBI:57444"/>
        <dbReference type="ChEBI" id="CHEBI:75231"/>
        <dbReference type="EC" id="4.2.1.152"/>
    </reaction>
    <physiologicalReaction direction="left-to-right" evidence="3">
        <dbReference type="Rhea" id="RHEA:37948"/>
    </physiologicalReaction>
</comment>
<comment type="catalytic activity">
    <reaction evidence="3">
        <text>(15S)-hydroperoxy-(5Z,8Z,11Z,13E)-eicosatetraenoate = 15-oxo-(5Z,8Z,11Z,13E)-eicosatetraenoate + H2O</text>
        <dbReference type="Rhea" id="RHEA:48636"/>
        <dbReference type="ChEBI" id="CHEBI:15377"/>
        <dbReference type="ChEBI" id="CHEBI:57410"/>
        <dbReference type="ChEBI" id="CHEBI:57446"/>
    </reaction>
    <physiologicalReaction direction="left-to-right" evidence="3">
        <dbReference type="Rhea" id="RHEA:48637"/>
    </physiologicalReaction>
</comment>
<comment type="catalytic activity">
    <reaction evidence="3">
        <text>(5S)-hydroperoxy-(6E,8Z,11Z,14Z)-eicosatetraenoate = 5-oxo-(6E,8Z,11Z,14Z)-eicosatetraenoate + H2O</text>
        <dbReference type="Rhea" id="RHEA:48632"/>
        <dbReference type="ChEBI" id="CHEBI:15377"/>
        <dbReference type="ChEBI" id="CHEBI:57450"/>
        <dbReference type="ChEBI" id="CHEBI:65342"/>
    </reaction>
    <physiologicalReaction direction="left-to-right" evidence="3">
        <dbReference type="Rhea" id="RHEA:48633"/>
    </physiologicalReaction>
</comment>
<comment type="cofactor">
    <cofactor evidence="1">
        <name>heme</name>
        <dbReference type="ChEBI" id="CHEBI:30413"/>
    </cofactor>
</comment>
<comment type="pathway">
    <text evidence="3">Steroid hormone biosynthesis.</text>
</comment>
<comment type="pathway">
    <text evidence="3">Lipid metabolism; fatty acid metabolism.</text>
</comment>
<comment type="pathway">
    <text evidence="3">Cofactor metabolism; retinol metabolism.</text>
</comment>
<comment type="subunit">
    <text evidence="2">Interacts with cytosolic chaperones HSP70 and HSP90; this interaction is required for initial targeting to mitochondria. Interacts (via mitochondrial targeting signal) with TOMM40 (via N-terminus); this interaction is required for translocation across the mitochondrial outer membrane.</text>
</comment>
<comment type="subcellular location">
    <subcellularLocation>
        <location evidence="2">Endoplasmic reticulum membrane</location>
        <topology evidence="2">Peripheral membrane protein</topology>
    </subcellularLocation>
    <subcellularLocation>
        <location evidence="2">Mitochondrion inner membrane</location>
        <topology evidence="2">Peripheral membrane protein</topology>
    </subcellularLocation>
    <subcellularLocation>
        <location evidence="2">Microsome membrane</location>
        <topology evidence="2">Peripheral membrane protein</topology>
    </subcellularLocation>
    <subcellularLocation>
        <location evidence="2">Cytoplasm</location>
    </subcellularLocation>
</comment>
<comment type="similarity">
    <text evidence="4">Belongs to the cytochrome P450 family.</text>
</comment>
<keyword id="KW-0963">Cytoplasm</keyword>
<keyword id="KW-0256">Endoplasmic reticulum</keyword>
<keyword id="KW-0325">Glycoprotein</keyword>
<keyword id="KW-0349">Heme</keyword>
<keyword id="KW-0408">Iron</keyword>
<keyword id="KW-0444">Lipid biosynthesis</keyword>
<keyword id="KW-0443">Lipid metabolism</keyword>
<keyword id="KW-0456">Lyase</keyword>
<keyword id="KW-0472">Membrane</keyword>
<keyword id="KW-0479">Metal-binding</keyword>
<keyword id="KW-0492">Microsome</keyword>
<keyword id="KW-0496">Mitochondrion</keyword>
<keyword id="KW-0999">Mitochondrion inner membrane</keyword>
<keyword id="KW-0503">Monooxygenase</keyword>
<keyword id="KW-0560">Oxidoreductase</keyword>
<keyword id="KW-0752">Steroid biosynthesis</keyword>